<name>ARLY_SYNPW</name>
<proteinExistence type="inferred from homology"/>
<comment type="catalytic activity">
    <reaction evidence="1">
        <text>2-(N(omega)-L-arginino)succinate = fumarate + L-arginine</text>
        <dbReference type="Rhea" id="RHEA:24020"/>
        <dbReference type="ChEBI" id="CHEBI:29806"/>
        <dbReference type="ChEBI" id="CHEBI:32682"/>
        <dbReference type="ChEBI" id="CHEBI:57472"/>
        <dbReference type="EC" id="4.3.2.1"/>
    </reaction>
</comment>
<comment type="pathway">
    <text evidence="1">Amino-acid biosynthesis; L-arginine biosynthesis; L-arginine from L-ornithine and carbamoyl phosphate: step 3/3.</text>
</comment>
<comment type="subcellular location">
    <subcellularLocation>
        <location evidence="1">Cytoplasm</location>
    </subcellularLocation>
</comment>
<comment type="similarity">
    <text evidence="1">Belongs to the lyase 1 family. Argininosuccinate lyase subfamily.</text>
</comment>
<keyword id="KW-0028">Amino-acid biosynthesis</keyword>
<keyword id="KW-0055">Arginine biosynthesis</keyword>
<keyword id="KW-0963">Cytoplasm</keyword>
<keyword id="KW-0456">Lyase</keyword>
<keyword id="KW-1185">Reference proteome</keyword>
<feature type="chain" id="PRO_1000000550" description="Argininosuccinate lyase">
    <location>
        <begin position="1"/>
        <end position="470"/>
    </location>
</feature>
<evidence type="ECO:0000255" key="1">
    <source>
        <dbReference type="HAMAP-Rule" id="MF_00006"/>
    </source>
</evidence>
<protein>
    <recommendedName>
        <fullName evidence="1">Argininosuccinate lyase</fullName>
        <shortName evidence="1">ASAL</shortName>
        <ecNumber evidence="1">4.3.2.1</ecNumber>
    </recommendedName>
    <alternativeName>
        <fullName evidence="1">Arginosuccinase</fullName>
    </alternativeName>
</protein>
<accession>A5GHM4</accession>
<dbReference type="EC" id="4.3.2.1" evidence="1"/>
<dbReference type="EMBL" id="CT971583">
    <property type="protein sequence ID" value="CAK22439.1"/>
    <property type="molecule type" value="Genomic_DNA"/>
</dbReference>
<dbReference type="SMR" id="A5GHM4"/>
<dbReference type="STRING" id="32051.SynWH7803_0013"/>
<dbReference type="KEGG" id="syx:SynWH7803_0013"/>
<dbReference type="eggNOG" id="COG0165">
    <property type="taxonomic scope" value="Bacteria"/>
</dbReference>
<dbReference type="HOGENOM" id="CLU_027272_2_3_3"/>
<dbReference type="OrthoDB" id="9769623at2"/>
<dbReference type="UniPathway" id="UPA00068">
    <property type="reaction ID" value="UER00114"/>
</dbReference>
<dbReference type="Proteomes" id="UP000001566">
    <property type="component" value="Chromosome"/>
</dbReference>
<dbReference type="GO" id="GO:0005829">
    <property type="term" value="C:cytosol"/>
    <property type="evidence" value="ECO:0007669"/>
    <property type="project" value="TreeGrafter"/>
</dbReference>
<dbReference type="GO" id="GO:0004056">
    <property type="term" value="F:argininosuccinate lyase activity"/>
    <property type="evidence" value="ECO:0007669"/>
    <property type="project" value="UniProtKB-UniRule"/>
</dbReference>
<dbReference type="GO" id="GO:0042450">
    <property type="term" value="P:arginine biosynthetic process via ornithine"/>
    <property type="evidence" value="ECO:0007669"/>
    <property type="project" value="InterPro"/>
</dbReference>
<dbReference type="GO" id="GO:0006526">
    <property type="term" value="P:L-arginine biosynthetic process"/>
    <property type="evidence" value="ECO:0007669"/>
    <property type="project" value="UniProtKB-UniRule"/>
</dbReference>
<dbReference type="CDD" id="cd01359">
    <property type="entry name" value="Argininosuccinate_lyase"/>
    <property type="match status" value="1"/>
</dbReference>
<dbReference type="FunFam" id="1.10.275.10:FF:000002">
    <property type="entry name" value="Argininosuccinate lyase"/>
    <property type="match status" value="1"/>
</dbReference>
<dbReference type="FunFam" id="1.10.40.30:FF:000001">
    <property type="entry name" value="Argininosuccinate lyase"/>
    <property type="match status" value="1"/>
</dbReference>
<dbReference type="FunFam" id="1.20.200.10:FF:000015">
    <property type="entry name" value="argininosuccinate lyase isoform X2"/>
    <property type="match status" value="1"/>
</dbReference>
<dbReference type="Gene3D" id="1.10.40.30">
    <property type="entry name" value="Fumarase/aspartase (C-terminal domain)"/>
    <property type="match status" value="1"/>
</dbReference>
<dbReference type="Gene3D" id="1.20.200.10">
    <property type="entry name" value="Fumarase/aspartase (Central domain)"/>
    <property type="match status" value="1"/>
</dbReference>
<dbReference type="Gene3D" id="1.10.275.10">
    <property type="entry name" value="Fumarase/aspartase (N-terminal domain)"/>
    <property type="match status" value="1"/>
</dbReference>
<dbReference type="HAMAP" id="MF_00006">
    <property type="entry name" value="Arg_succ_lyase"/>
    <property type="match status" value="1"/>
</dbReference>
<dbReference type="InterPro" id="IPR029419">
    <property type="entry name" value="Arg_succ_lyase_C"/>
</dbReference>
<dbReference type="InterPro" id="IPR009049">
    <property type="entry name" value="Argininosuccinate_lyase"/>
</dbReference>
<dbReference type="InterPro" id="IPR024083">
    <property type="entry name" value="Fumarase/histidase_N"/>
</dbReference>
<dbReference type="InterPro" id="IPR020557">
    <property type="entry name" value="Fumarate_lyase_CS"/>
</dbReference>
<dbReference type="InterPro" id="IPR000362">
    <property type="entry name" value="Fumarate_lyase_fam"/>
</dbReference>
<dbReference type="InterPro" id="IPR022761">
    <property type="entry name" value="Fumarate_lyase_N"/>
</dbReference>
<dbReference type="InterPro" id="IPR008948">
    <property type="entry name" value="L-Aspartase-like"/>
</dbReference>
<dbReference type="NCBIfam" id="TIGR00838">
    <property type="entry name" value="argH"/>
    <property type="match status" value="1"/>
</dbReference>
<dbReference type="PANTHER" id="PTHR43814">
    <property type="entry name" value="ARGININOSUCCINATE LYASE"/>
    <property type="match status" value="1"/>
</dbReference>
<dbReference type="PANTHER" id="PTHR43814:SF1">
    <property type="entry name" value="ARGININOSUCCINATE LYASE"/>
    <property type="match status" value="1"/>
</dbReference>
<dbReference type="Pfam" id="PF14698">
    <property type="entry name" value="ASL_C2"/>
    <property type="match status" value="1"/>
</dbReference>
<dbReference type="Pfam" id="PF00206">
    <property type="entry name" value="Lyase_1"/>
    <property type="match status" value="1"/>
</dbReference>
<dbReference type="PRINTS" id="PR00145">
    <property type="entry name" value="ARGSUCLYASE"/>
</dbReference>
<dbReference type="PRINTS" id="PR00149">
    <property type="entry name" value="FUMRATELYASE"/>
</dbReference>
<dbReference type="SUPFAM" id="SSF48557">
    <property type="entry name" value="L-aspartase-like"/>
    <property type="match status" value="1"/>
</dbReference>
<dbReference type="PROSITE" id="PS00163">
    <property type="entry name" value="FUMARATE_LYASES"/>
    <property type="match status" value="1"/>
</dbReference>
<reference key="1">
    <citation type="submission" date="2006-05" db="EMBL/GenBank/DDBJ databases">
        <authorList>
            <consortium name="Genoscope"/>
        </authorList>
    </citation>
    <scope>NUCLEOTIDE SEQUENCE [LARGE SCALE GENOMIC DNA]</scope>
    <source>
        <strain>WH7803</strain>
    </source>
</reference>
<sequence>MAGGVTGGGSATWSDRFEQGLHPAIERFNASIGFDITLLQEDLDGSMAHARMLAQCGVISEAEADQLCGGLEQIRAEAAEGRFQPGLDDEDVHFAVERRLIALLGPVGKKLHTGRSRNDQVGTDLRLWLRRRIDELIPQVKTFQRALLRQALSHRRTLIPGYTHLQRAQPVCLAHHLLAYVEMLERDRQRLEDVRKRVNVSPLGAAALAGTPVPIDRRSTAAALGFDGLYANSLDAVSDRDFAVEFSAAISLVMVHLSRLGEEVIFWASEECGFVRLSDRCATGSSLMPQKKNPDVPELVRGKCGRVFGHLQGLLTMIKGLPLAYNKDFQEDKEALFDVVSTGSQCLEAMTILMDEGLSFREDRLEAAVAADFSNATDVADYLVARQVPFREAYQIVGSVVKQCLSEGVLLRDLSLERWQSFHPAIESDLYDALAPRQVVAARTSEGGTGFDRVEEQLSAWSERLDLANG</sequence>
<organism>
    <name type="scientific">Synechococcus sp. (strain WH7803)</name>
    <dbReference type="NCBI Taxonomy" id="32051"/>
    <lineage>
        <taxon>Bacteria</taxon>
        <taxon>Bacillati</taxon>
        <taxon>Cyanobacteriota</taxon>
        <taxon>Cyanophyceae</taxon>
        <taxon>Synechococcales</taxon>
        <taxon>Synechococcaceae</taxon>
        <taxon>Synechococcus</taxon>
    </lineage>
</organism>
<gene>
    <name evidence="1" type="primary">argH</name>
    <name type="ordered locus">SynWH7803_0013</name>
</gene>